<reference key="1">
    <citation type="journal article" date="2003" name="Proc. Natl. Acad. Sci. U.S.A.">
        <title>The complete genome sequence of the Arabidopsis and tomato pathogen Pseudomonas syringae pv. tomato DC3000.</title>
        <authorList>
            <person name="Buell C.R."/>
            <person name="Joardar V."/>
            <person name="Lindeberg M."/>
            <person name="Selengut J."/>
            <person name="Paulsen I.T."/>
            <person name="Gwinn M.L."/>
            <person name="Dodson R.J."/>
            <person name="DeBoy R.T."/>
            <person name="Durkin A.S."/>
            <person name="Kolonay J.F."/>
            <person name="Madupu R."/>
            <person name="Daugherty S.C."/>
            <person name="Brinkac L.M."/>
            <person name="Beanan M.J."/>
            <person name="Haft D.H."/>
            <person name="Nelson W.C."/>
            <person name="Davidsen T.M."/>
            <person name="Zafar N."/>
            <person name="Zhou L."/>
            <person name="Liu J."/>
            <person name="Yuan Q."/>
            <person name="Khouri H.M."/>
            <person name="Fedorova N.B."/>
            <person name="Tran B."/>
            <person name="Russell D."/>
            <person name="Berry K.J."/>
            <person name="Utterback T.R."/>
            <person name="Van Aken S.E."/>
            <person name="Feldblyum T.V."/>
            <person name="D'Ascenzo M."/>
            <person name="Deng W.-L."/>
            <person name="Ramos A.R."/>
            <person name="Alfano J.R."/>
            <person name="Cartinhour S."/>
            <person name="Chatterjee A.K."/>
            <person name="Delaney T.P."/>
            <person name="Lazarowitz S.G."/>
            <person name="Martin G.B."/>
            <person name="Schneider D.J."/>
            <person name="Tang X."/>
            <person name="Bender C.L."/>
            <person name="White O."/>
            <person name="Fraser C.M."/>
            <person name="Collmer A."/>
        </authorList>
    </citation>
    <scope>NUCLEOTIDE SEQUENCE [LARGE SCALE GENOMIC DNA]</scope>
    <source>
        <strain>ATCC BAA-871 / DC3000</strain>
    </source>
</reference>
<proteinExistence type="inferred from homology"/>
<protein>
    <recommendedName>
        <fullName evidence="1">Molybdenum cofactor guanylyltransferase</fullName>
        <shortName evidence="1">MoCo guanylyltransferase</shortName>
        <ecNumber evidence="1">2.7.7.77</ecNumber>
    </recommendedName>
    <alternativeName>
        <fullName evidence="1">GTP:molybdopterin guanylyltransferase</fullName>
    </alternativeName>
    <alternativeName>
        <fullName evidence="1">Mo-MPT guanylyltransferase</fullName>
    </alternativeName>
    <alternativeName>
        <fullName evidence="1">Molybdopterin guanylyltransferase</fullName>
    </alternativeName>
    <alternativeName>
        <fullName evidence="1">Molybdopterin-guanine dinucleotide synthase</fullName>
        <shortName evidence="1">MGD synthase</shortName>
    </alternativeName>
</protein>
<accession>Q883K6</accession>
<sequence>MNVRAALPPCSILLLAGGRGQRMGGRDKGLIEWQGKALIEHLHALTRPLTDDLIISCNRNIERYAQYADQLVKDDDTDFNGPLAGIRAALPRARHQWLLVLPCDGPLVDEPLLRAMREKAFEYPQRPVMVREGQHWQPLLCMIPVACAATLEAAWLAGERSPRRAMEPLQPVAVQLEANDPRLANLNTPCLLAGINENDRK</sequence>
<dbReference type="EC" id="2.7.7.77" evidence="1"/>
<dbReference type="EMBL" id="AE016853">
    <property type="protein sequence ID" value="AAO55862.1"/>
    <property type="molecule type" value="Genomic_DNA"/>
</dbReference>
<dbReference type="RefSeq" id="NP_792167.1">
    <property type="nucleotide sequence ID" value="NC_004578.1"/>
</dbReference>
<dbReference type="RefSeq" id="WP_011103963.1">
    <property type="nucleotide sequence ID" value="NC_004578.1"/>
</dbReference>
<dbReference type="SMR" id="Q883K6"/>
<dbReference type="STRING" id="223283.PSPTO_2351"/>
<dbReference type="GeneID" id="1184002"/>
<dbReference type="KEGG" id="pst:PSPTO_2351"/>
<dbReference type="PATRIC" id="fig|223283.9.peg.2386"/>
<dbReference type="eggNOG" id="COG0746">
    <property type="taxonomic scope" value="Bacteria"/>
</dbReference>
<dbReference type="HOGENOM" id="CLU_055597_5_1_6"/>
<dbReference type="OrthoDB" id="9788394at2"/>
<dbReference type="PhylomeDB" id="Q883K6"/>
<dbReference type="Proteomes" id="UP000002515">
    <property type="component" value="Chromosome"/>
</dbReference>
<dbReference type="GO" id="GO:0005737">
    <property type="term" value="C:cytoplasm"/>
    <property type="evidence" value="ECO:0007669"/>
    <property type="project" value="UniProtKB-SubCell"/>
</dbReference>
<dbReference type="GO" id="GO:0005525">
    <property type="term" value="F:GTP binding"/>
    <property type="evidence" value="ECO:0007669"/>
    <property type="project" value="UniProtKB-UniRule"/>
</dbReference>
<dbReference type="GO" id="GO:0046872">
    <property type="term" value="F:metal ion binding"/>
    <property type="evidence" value="ECO:0007669"/>
    <property type="project" value="UniProtKB-KW"/>
</dbReference>
<dbReference type="GO" id="GO:0061603">
    <property type="term" value="F:molybdenum cofactor guanylyltransferase activity"/>
    <property type="evidence" value="ECO:0007669"/>
    <property type="project" value="UniProtKB-EC"/>
</dbReference>
<dbReference type="GO" id="GO:1902758">
    <property type="term" value="P:bis(molybdopterin guanine dinucleotide)molybdenum biosynthetic process"/>
    <property type="evidence" value="ECO:0007669"/>
    <property type="project" value="TreeGrafter"/>
</dbReference>
<dbReference type="CDD" id="cd02503">
    <property type="entry name" value="MobA"/>
    <property type="match status" value="1"/>
</dbReference>
<dbReference type="Gene3D" id="3.90.550.10">
    <property type="entry name" value="Spore Coat Polysaccharide Biosynthesis Protein SpsA, Chain A"/>
    <property type="match status" value="1"/>
</dbReference>
<dbReference type="HAMAP" id="MF_00316">
    <property type="entry name" value="MobA"/>
    <property type="match status" value="1"/>
</dbReference>
<dbReference type="InterPro" id="IPR025877">
    <property type="entry name" value="MobA-like_NTP_Trfase"/>
</dbReference>
<dbReference type="InterPro" id="IPR013482">
    <property type="entry name" value="Molybde_CF_guanTrfase"/>
</dbReference>
<dbReference type="InterPro" id="IPR029044">
    <property type="entry name" value="Nucleotide-diphossugar_trans"/>
</dbReference>
<dbReference type="NCBIfam" id="TIGR02665">
    <property type="entry name" value="molyb_mobA"/>
    <property type="match status" value="1"/>
</dbReference>
<dbReference type="PANTHER" id="PTHR19136">
    <property type="entry name" value="MOLYBDENUM COFACTOR GUANYLYLTRANSFERASE"/>
    <property type="match status" value="1"/>
</dbReference>
<dbReference type="PANTHER" id="PTHR19136:SF81">
    <property type="entry name" value="MOLYBDENUM COFACTOR GUANYLYLTRANSFERASE"/>
    <property type="match status" value="1"/>
</dbReference>
<dbReference type="Pfam" id="PF12804">
    <property type="entry name" value="NTP_transf_3"/>
    <property type="match status" value="1"/>
</dbReference>
<dbReference type="SUPFAM" id="SSF53448">
    <property type="entry name" value="Nucleotide-diphospho-sugar transferases"/>
    <property type="match status" value="1"/>
</dbReference>
<name>MOBA_PSESM</name>
<feature type="chain" id="PRO_0000134902" description="Molybdenum cofactor guanylyltransferase">
    <location>
        <begin position="1"/>
        <end position="201"/>
    </location>
</feature>
<feature type="binding site" evidence="1">
    <location>
        <begin position="15"/>
        <end position="17"/>
    </location>
    <ligand>
        <name>GTP</name>
        <dbReference type="ChEBI" id="CHEBI:37565"/>
    </ligand>
</feature>
<feature type="binding site" evidence="1">
    <location>
        <position position="28"/>
    </location>
    <ligand>
        <name>GTP</name>
        <dbReference type="ChEBI" id="CHEBI:37565"/>
    </ligand>
</feature>
<feature type="binding site" evidence="1">
    <location>
        <position position="74"/>
    </location>
    <ligand>
        <name>GTP</name>
        <dbReference type="ChEBI" id="CHEBI:37565"/>
    </ligand>
</feature>
<feature type="binding site" evidence="1">
    <location>
        <position position="104"/>
    </location>
    <ligand>
        <name>GTP</name>
        <dbReference type="ChEBI" id="CHEBI:37565"/>
    </ligand>
</feature>
<feature type="binding site" evidence="1">
    <location>
        <position position="104"/>
    </location>
    <ligand>
        <name>Mg(2+)</name>
        <dbReference type="ChEBI" id="CHEBI:18420"/>
    </ligand>
</feature>
<gene>
    <name evidence="1" type="primary">mobA</name>
    <name type="ordered locus">PSPTO_2351</name>
</gene>
<comment type="function">
    <text evidence="1">Transfers a GMP moiety from GTP to Mo-molybdopterin (Mo-MPT) cofactor (Moco or molybdenum cofactor) to form Mo-molybdopterin guanine dinucleotide (Mo-MGD) cofactor.</text>
</comment>
<comment type="catalytic activity">
    <reaction evidence="1">
        <text>Mo-molybdopterin + GTP + H(+) = Mo-molybdopterin guanine dinucleotide + diphosphate</text>
        <dbReference type="Rhea" id="RHEA:34243"/>
        <dbReference type="ChEBI" id="CHEBI:15378"/>
        <dbReference type="ChEBI" id="CHEBI:33019"/>
        <dbReference type="ChEBI" id="CHEBI:37565"/>
        <dbReference type="ChEBI" id="CHEBI:71302"/>
        <dbReference type="ChEBI" id="CHEBI:71310"/>
        <dbReference type="EC" id="2.7.7.77"/>
    </reaction>
</comment>
<comment type="cofactor">
    <cofactor evidence="1">
        <name>Mg(2+)</name>
        <dbReference type="ChEBI" id="CHEBI:18420"/>
    </cofactor>
</comment>
<comment type="subunit">
    <text evidence="1">Monomer.</text>
</comment>
<comment type="subcellular location">
    <subcellularLocation>
        <location evidence="1">Cytoplasm</location>
    </subcellularLocation>
</comment>
<comment type="domain">
    <text evidence="1">The N-terminal domain determines nucleotide recognition and specific binding, while the C-terminal domain determines the specific binding to the target protein.</text>
</comment>
<comment type="similarity">
    <text evidence="1">Belongs to the MobA family.</text>
</comment>
<evidence type="ECO:0000255" key="1">
    <source>
        <dbReference type="HAMAP-Rule" id="MF_00316"/>
    </source>
</evidence>
<organism>
    <name type="scientific">Pseudomonas syringae pv. tomato (strain ATCC BAA-871 / DC3000)</name>
    <dbReference type="NCBI Taxonomy" id="223283"/>
    <lineage>
        <taxon>Bacteria</taxon>
        <taxon>Pseudomonadati</taxon>
        <taxon>Pseudomonadota</taxon>
        <taxon>Gammaproteobacteria</taxon>
        <taxon>Pseudomonadales</taxon>
        <taxon>Pseudomonadaceae</taxon>
        <taxon>Pseudomonas</taxon>
    </lineage>
</organism>
<keyword id="KW-0963">Cytoplasm</keyword>
<keyword id="KW-0342">GTP-binding</keyword>
<keyword id="KW-0460">Magnesium</keyword>
<keyword id="KW-0479">Metal-binding</keyword>
<keyword id="KW-0501">Molybdenum cofactor biosynthesis</keyword>
<keyword id="KW-0547">Nucleotide-binding</keyword>
<keyword id="KW-1185">Reference proteome</keyword>
<keyword id="KW-0808">Transferase</keyword>